<organism>
    <name type="scientific">Aedes aegypti</name>
    <name type="common">Yellowfever mosquito</name>
    <name type="synonym">Culex aegypti</name>
    <dbReference type="NCBI Taxonomy" id="7159"/>
    <lineage>
        <taxon>Eukaryota</taxon>
        <taxon>Metazoa</taxon>
        <taxon>Ecdysozoa</taxon>
        <taxon>Arthropoda</taxon>
        <taxon>Hexapoda</taxon>
        <taxon>Insecta</taxon>
        <taxon>Pterygota</taxon>
        <taxon>Neoptera</taxon>
        <taxon>Endopterygota</taxon>
        <taxon>Diptera</taxon>
        <taxon>Nematocera</taxon>
        <taxon>Culicoidea</taxon>
        <taxon>Culicidae</taxon>
        <taxon>Culicinae</taxon>
        <taxon>Aedini</taxon>
        <taxon>Aedes</taxon>
        <taxon>Stegomyia</taxon>
    </lineage>
</organism>
<accession>Q1HR24</accession>
<reference evidence="5" key="1">
    <citation type="journal article" date="2007" name="BMC Genomics">
        <title>An annotated catalogue of salivary gland transcripts in the adult female mosquito, Aedes aegypti.</title>
        <authorList>
            <person name="Ribeiro J.M.C."/>
            <person name="Arca B."/>
            <person name="Lombardo F."/>
            <person name="Calvo E."/>
            <person name="Phan V.M."/>
            <person name="Chandra P.K."/>
            <person name="Wikel S.K."/>
        </authorList>
    </citation>
    <scope>NUCLEOTIDE SEQUENCE [LARGE SCALE MRNA]</scope>
    <source>
        <strain>Black-eyed Liverpool</strain>
        <tissue>Salivary gland</tissue>
    </source>
</reference>
<reference evidence="6" key="2">
    <citation type="journal article" date="2007" name="Science">
        <title>Genome sequence of Aedes aegypti, a major arbovirus vector.</title>
        <authorList>
            <person name="Nene V."/>
            <person name="Wortman J.R."/>
            <person name="Lawson D."/>
            <person name="Haas B.J."/>
            <person name="Kodira C.D."/>
            <person name="Tu Z.J."/>
            <person name="Loftus B.J."/>
            <person name="Xi Z."/>
            <person name="Megy K."/>
            <person name="Grabherr M."/>
            <person name="Ren Q."/>
            <person name="Zdobnov E.M."/>
            <person name="Lobo N.F."/>
            <person name="Campbell K.S."/>
            <person name="Brown S.E."/>
            <person name="Bonaldo M.F."/>
            <person name="Zhu J."/>
            <person name="Sinkins S.P."/>
            <person name="Hogenkamp D.G."/>
            <person name="Amedeo P."/>
            <person name="Arensburger P."/>
            <person name="Atkinson P.W."/>
            <person name="Bidwell S.L."/>
            <person name="Biedler J."/>
            <person name="Birney E."/>
            <person name="Bruggner R.V."/>
            <person name="Costas J."/>
            <person name="Coy M.R."/>
            <person name="Crabtree J."/>
            <person name="Crawford M."/>
            <person name="DeBruyn B."/>
            <person name="DeCaprio D."/>
            <person name="Eiglmeier K."/>
            <person name="Eisenstadt E."/>
            <person name="El-Dorry H."/>
            <person name="Gelbart W.M."/>
            <person name="Gomes S.L."/>
            <person name="Hammond M."/>
            <person name="Hannick L.I."/>
            <person name="Hogan J.R."/>
            <person name="Holmes M.H."/>
            <person name="Jaffe D."/>
            <person name="Johnston S.J."/>
            <person name="Kennedy R.C."/>
            <person name="Koo H."/>
            <person name="Kravitz S."/>
            <person name="Kriventseva E.V."/>
            <person name="Kulp D."/>
            <person name="Labutti K."/>
            <person name="Lee E."/>
            <person name="Li S."/>
            <person name="Lovin D.D."/>
            <person name="Mao C."/>
            <person name="Mauceli E."/>
            <person name="Menck C.F."/>
            <person name="Miller J.R."/>
            <person name="Montgomery P."/>
            <person name="Mori A."/>
            <person name="Nascimento A.L."/>
            <person name="Naveira H.F."/>
            <person name="Nusbaum C."/>
            <person name="O'Leary S.B."/>
            <person name="Orvis J."/>
            <person name="Pertea M."/>
            <person name="Quesneville H."/>
            <person name="Reidenbach K.R."/>
            <person name="Rogers Y.-H.C."/>
            <person name="Roth C.W."/>
            <person name="Schneider J.R."/>
            <person name="Schatz M."/>
            <person name="Shumway M."/>
            <person name="Stanke M."/>
            <person name="Stinson E.O."/>
            <person name="Tubio J.M.C."/>
            <person name="Vanzee J.P."/>
            <person name="Verjovski-Almeida S."/>
            <person name="Werner D."/>
            <person name="White O.R."/>
            <person name="Wyder S."/>
            <person name="Zeng Q."/>
            <person name="Zhao Q."/>
            <person name="Zhao Y."/>
            <person name="Hill C.A."/>
            <person name="Raikhel A.S."/>
            <person name="Soares M.B."/>
            <person name="Knudson D.L."/>
            <person name="Lee N.H."/>
            <person name="Galagan J."/>
            <person name="Salzberg S.L."/>
            <person name="Paulsen I.T."/>
            <person name="Dimopoulos G."/>
            <person name="Collins F.H."/>
            <person name="Bruce B."/>
            <person name="Fraser-Liggett C.M."/>
            <person name="Severson D.W."/>
        </authorList>
    </citation>
    <scope>NUCLEOTIDE SEQUENCE [LARGE SCALE GENOMIC DNA]</scope>
    <source>
        <strain>LVPib12</strain>
    </source>
</reference>
<dbReference type="EMBL" id="DQ440270">
    <property type="protein sequence ID" value="ABF18303.1"/>
    <property type="molecule type" value="mRNA"/>
</dbReference>
<dbReference type="EMBL" id="CH477333">
    <property type="protein sequence ID" value="EAT43298.1"/>
    <property type="molecule type" value="Genomic_DNA"/>
</dbReference>
<dbReference type="EMBL" id="CH477333">
    <property type="protein sequence ID" value="EAT43299.1"/>
    <property type="molecule type" value="Genomic_DNA"/>
</dbReference>
<dbReference type="SMR" id="Q1HR24"/>
<dbReference type="FunCoup" id="Q1HR24">
    <property type="interactions" value="1211"/>
</dbReference>
<dbReference type="STRING" id="7159.Q1HR24"/>
<dbReference type="PaxDb" id="7159-AAEL005266-PB"/>
<dbReference type="EnsemblMetazoa" id="AAEL005266-RC">
    <property type="protein sequence ID" value="AAEL005266-PC"/>
    <property type="gene ID" value="AAEL005266"/>
</dbReference>
<dbReference type="EnsemblMetazoa" id="AAEL005266-RD">
    <property type="protein sequence ID" value="AAEL005266-PD"/>
    <property type="gene ID" value="AAEL005266"/>
</dbReference>
<dbReference type="GeneID" id="5566228"/>
<dbReference type="KEGG" id="aag:5566228"/>
<dbReference type="VEuPathDB" id="VectorBase:AAEL005266"/>
<dbReference type="eggNOG" id="KOG0407">
    <property type="taxonomic scope" value="Eukaryota"/>
</dbReference>
<dbReference type="HOGENOM" id="CLU_072439_6_0_1"/>
<dbReference type="InParanoid" id="Q1HR24"/>
<dbReference type="OMA" id="KWGVAHI"/>
<dbReference type="OrthoDB" id="1677536at2759"/>
<dbReference type="PhylomeDB" id="Q1HR24"/>
<dbReference type="Proteomes" id="UP000008820">
    <property type="component" value="Chromosome 1"/>
</dbReference>
<dbReference type="Proteomes" id="UP000682892">
    <property type="component" value="Chromosome 2"/>
</dbReference>
<dbReference type="GO" id="GO:1990904">
    <property type="term" value="C:ribonucleoprotein complex"/>
    <property type="evidence" value="ECO:0007669"/>
    <property type="project" value="UniProtKB-KW"/>
</dbReference>
<dbReference type="GO" id="GO:0005840">
    <property type="term" value="C:ribosome"/>
    <property type="evidence" value="ECO:0007669"/>
    <property type="project" value="UniProtKB-KW"/>
</dbReference>
<dbReference type="GO" id="GO:0003735">
    <property type="term" value="F:structural constituent of ribosome"/>
    <property type="evidence" value="ECO:0007669"/>
    <property type="project" value="InterPro"/>
</dbReference>
<dbReference type="GO" id="GO:0006412">
    <property type="term" value="P:translation"/>
    <property type="evidence" value="ECO:0007669"/>
    <property type="project" value="InterPro"/>
</dbReference>
<dbReference type="FunFam" id="3.30.420.80:FF:000002">
    <property type="entry name" value="40S ribosomal protein S14"/>
    <property type="match status" value="1"/>
</dbReference>
<dbReference type="Gene3D" id="3.30.420.80">
    <property type="entry name" value="Ribosomal protein S11"/>
    <property type="match status" value="1"/>
</dbReference>
<dbReference type="HAMAP" id="MF_01310">
    <property type="entry name" value="Ribosomal_uS11"/>
    <property type="match status" value="1"/>
</dbReference>
<dbReference type="InterPro" id="IPR001971">
    <property type="entry name" value="Ribosomal_uS11"/>
</dbReference>
<dbReference type="InterPro" id="IPR018102">
    <property type="entry name" value="Ribosomal_uS11_CS"/>
</dbReference>
<dbReference type="InterPro" id="IPR036967">
    <property type="entry name" value="Ribosomal_uS11_sf"/>
</dbReference>
<dbReference type="NCBIfam" id="NF007176">
    <property type="entry name" value="PRK09607.1"/>
    <property type="match status" value="1"/>
</dbReference>
<dbReference type="PANTHER" id="PTHR11759">
    <property type="entry name" value="40S RIBOSOMAL PROTEIN S14/30S RIBOSOMAL PROTEIN S11"/>
    <property type="match status" value="1"/>
</dbReference>
<dbReference type="Pfam" id="PF00411">
    <property type="entry name" value="Ribosomal_S11"/>
    <property type="match status" value="1"/>
</dbReference>
<dbReference type="PIRSF" id="PIRSF002131">
    <property type="entry name" value="Ribosomal_S11"/>
    <property type="match status" value="1"/>
</dbReference>
<dbReference type="SUPFAM" id="SSF53137">
    <property type="entry name" value="Translational machinery components"/>
    <property type="match status" value="1"/>
</dbReference>
<dbReference type="PROSITE" id="PS00054">
    <property type="entry name" value="RIBOSOMAL_S11"/>
    <property type="match status" value="1"/>
</dbReference>
<gene>
    <name evidence="1" type="primary">RpS14</name>
    <name type="ORF">AAEL005266</name>
</gene>
<sequence length="151" mass="16256">MAPRKNKTVKEEVQVSLGPQVREGEIVFGVAHIYASFNDTFVHVTDLSGKETISRVTGGMKVKADRDEASPYAAMLAAQDVAEKCKSLGITALHIKLRATGGNRTKTPGPGAQSALRALARSSMKIGRIEDVTPIPSDSTRRKGGRRGRRL</sequence>
<keyword id="KW-1185">Reference proteome</keyword>
<keyword id="KW-0687">Ribonucleoprotein</keyword>
<keyword id="KW-0689">Ribosomal protein</keyword>
<feature type="chain" id="PRO_0000372796" description="Small ribosomal subunit protein uS11">
    <location>
        <begin position="1"/>
        <end position="151"/>
    </location>
</feature>
<feature type="region of interest" description="Disordered" evidence="3">
    <location>
        <begin position="130"/>
        <end position="151"/>
    </location>
</feature>
<feature type="compositionally biased region" description="Basic residues" evidence="3">
    <location>
        <begin position="142"/>
        <end position="151"/>
    </location>
</feature>
<protein>
    <recommendedName>
        <fullName evidence="4">Small ribosomal subunit protein uS11</fullName>
    </recommendedName>
    <alternativeName>
        <fullName>40S ribosomal protein S14</fullName>
    </alternativeName>
</protein>
<evidence type="ECO:0000250" key="1">
    <source>
        <dbReference type="UniProtKB" id="P14130"/>
    </source>
</evidence>
<evidence type="ECO:0000255" key="2"/>
<evidence type="ECO:0000256" key="3">
    <source>
        <dbReference type="SAM" id="MobiDB-lite"/>
    </source>
</evidence>
<evidence type="ECO:0000305" key="4"/>
<evidence type="ECO:0000312" key="5">
    <source>
        <dbReference type="EMBL" id="ABF18303.1"/>
    </source>
</evidence>
<evidence type="ECO:0000312" key="6">
    <source>
        <dbReference type="EMBL" id="EAT43298.1"/>
    </source>
</evidence>
<name>RS14_AEDAE</name>
<proteinExistence type="evidence at transcript level"/>
<comment type="similarity">
    <text evidence="2">Belongs to the universal ribosomal protein uS11 family.</text>
</comment>